<feature type="chain" id="PRO_0000078044" description="Uncharacterized protein HI_1406">
    <location>
        <begin position="1"/>
        <end position="118"/>
    </location>
</feature>
<keyword id="KW-1185">Reference proteome</keyword>
<proteinExistence type="predicted"/>
<name>Y1406_HAEIN</name>
<organism>
    <name type="scientific">Haemophilus influenzae (strain ATCC 51907 / DSM 11121 / KW20 / Rd)</name>
    <dbReference type="NCBI Taxonomy" id="71421"/>
    <lineage>
        <taxon>Bacteria</taxon>
        <taxon>Pseudomonadati</taxon>
        <taxon>Pseudomonadota</taxon>
        <taxon>Gammaproteobacteria</taxon>
        <taxon>Pasteurellales</taxon>
        <taxon>Pasteurellaceae</taxon>
        <taxon>Haemophilus</taxon>
    </lineage>
</organism>
<accession>P44181</accession>
<sequence>MKRNWDLIRSILLKLESQSEARGSLLPDGFTGFDSETVSYHFKLLQSAGLIEAIDYSSLNEMSLIARLLTWQGHELLDKIRNDTVWNSLKTTIKSKSLDLSLDAIKQVAQTIISQMLA</sequence>
<protein>
    <recommendedName>
        <fullName>Uncharacterized protein HI_1406</fullName>
    </recommendedName>
</protein>
<reference key="1">
    <citation type="journal article" date="1995" name="Science">
        <title>Whole-genome random sequencing and assembly of Haemophilus influenzae Rd.</title>
        <authorList>
            <person name="Fleischmann R.D."/>
            <person name="Adams M.D."/>
            <person name="White O."/>
            <person name="Clayton R.A."/>
            <person name="Kirkness E.F."/>
            <person name="Kerlavage A.R."/>
            <person name="Bult C.J."/>
            <person name="Tomb J.-F."/>
            <person name="Dougherty B.A."/>
            <person name="Merrick J.M."/>
            <person name="McKenney K."/>
            <person name="Sutton G.G."/>
            <person name="FitzHugh W."/>
            <person name="Fields C.A."/>
            <person name="Gocayne J.D."/>
            <person name="Scott J.D."/>
            <person name="Shirley R."/>
            <person name="Liu L.-I."/>
            <person name="Glodek A."/>
            <person name="Kelley J.M."/>
            <person name="Weidman J.F."/>
            <person name="Phillips C.A."/>
            <person name="Spriggs T."/>
            <person name="Hedblom E."/>
            <person name="Cotton M.D."/>
            <person name="Utterback T.R."/>
            <person name="Hanna M.C."/>
            <person name="Nguyen D.T."/>
            <person name="Saudek D.M."/>
            <person name="Brandon R.C."/>
            <person name="Fine L.D."/>
            <person name="Fritchman J.L."/>
            <person name="Fuhrmann J.L."/>
            <person name="Geoghagen N.S.M."/>
            <person name="Gnehm C.L."/>
            <person name="McDonald L.A."/>
            <person name="Small K.V."/>
            <person name="Fraser C.M."/>
            <person name="Smith H.O."/>
            <person name="Venter J.C."/>
        </authorList>
    </citation>
    <scope>NUCLEOTIDE SEQUENCE [LARGE SCALE GENOMIC DNA]</scope>
    <source>
        <strain>ATCC 51907 / DSM 11121 / KW20 / Rd</strain>
    </source>
</reference>
<gene>
    <name type="ordered locus">HI_1406</name>
</gene>
<dbReference type="EMBL" id="L42023">
    <property type="protein sequence ID" value="AAC23056.1"/>
    <property type="molecule type" value="Genomic_DNA"/>
</dbReference>
<dbReference type="PIR" id="B64028">
    <property type="entry name" value="B64028"/>
</dbReference>
<dbReference type="RefSeq" id="NP_439558.1">
    <property type="nucleotide sequence ID" value="NC_000907.1"/>
</dbReference>
<dbReference type="SMR" id="P44181"/>
<dbReference type="EnsemblBacteria" id="AAC23056">
    <property type="protein sequence ID" value="AAC23056"/>
    <property type="gene ID" value="HI_1406"/>
</dbReference>
<dbReference type="KEGG" id="hin:HI_1406"/>
<dbReference type="PATRIC" id="fig|71421.8.peg.1466"/>
<dbReference type="eggNOG" id="ENOG5033A72">
    <property type="taxonomic scope" value="Bacteria"/>
</dbReference>
<dbReference type="HOGENOM" id="CLU_139712_2_0_6"/>
<dbReference type="OrthoDB" id="6960201at2"/>
<dbReference type="PhylomeDB" id="P44181"/>
<dbReference type="BioCyc" id="HINF71421:G1GJ1-1431-MONOMER"/>
<dbReference type="Proteomes" id="UP000000579">
    <property type="component" value="Chromosome"/>
</dbReference>
<dbReference type="InterPro" id="IPR019650">
    <property type="entry name" value="DUF2513"/>
</dbReference>
<dbReference type="Pfam" id="PF10711">
    <property type="entry name" value="DUF2513"/>
    <property type="match status" value="1"/>
</dbReference>